<accession>P0A1K0</accession>
<accession>P15933</accession>
<gene>
    <name type="primary">fliG</name>
    <name type="synonym">fla AII.2</name>
    <name type="synonym">fla BII</name>
    <name type="ordered locus">STY2178</name>
    <name type="ordered locus">t0907</name>
</gene>
<dbReference type="EMBL" id="AL513382">
    <property type="protein sequence ID" value="CAD05718.1"/>
    <property type="molecule type" value="Genomic_DNA"/>
</dbReference>
<dbReference type="EMBL" id="AE014613">
    <property type="protein sequence ID" value="AAO68585.1"/>
    <property type="molecule type" value="Genomic_DNA"/>
</dbReference>
<dbReference type="RefSeq" id="NP_456531.1">
    <property type="nucleotide sequence ID" value="NC_003198.1"/>
</dbReference>
<dbReference type="RefSeq" id="WP_000067735.1">
    <property type="nucleotide sequence ID" value="NZ_WSUR01000004.1"/>
</dbReference>
<dbReference type="SMR" id="P0A1K0"/>
<dbReference type="STRING" id="220341.gene:17586086"/>
<dbReference type="KEGG" id="stt:t0907"/>
<dbReference type="KEGG" id="sty:STY2178"/>
<dbReference type="PATRIC" id="fig|220341.7.peg.2193"/>
<dbReference type="eggNOG" id="COG1536">
    <property type="taxonomic scope" value="Bacteria"/>
</dbReference>
<dbReference type="HOGENOM" id="CLU_047835_2_0_6"/>
<dbReference type="OMA" id="FIQDEHP"/>
<dbReference type="OrthoDB" id="9780302at2"/>
<dbReference type="Proteomes" id="UP000000541">
    <property type="component" value="Chromosome"/>
</dbReference>
<dbReference type="Proteomes" id="UP000002670">
    <property type="component" value="Chromosome"/>
</dbReference>
<dbReference type="GO" id="GO:0009425">
    <property type="term" value="C:bacterial-type flagellum basal body"/>
    <property type="evidence" value="ECO:0007669"/>
    <property type="project" value="UniProtKB-SubCell"/>
</dbReference>
<dbReference type="GO" id="GO:0005886">
    <property type="term" value="C:plasma membrane"/>
    <property type="evidence" value="ECO:0007669"/>
    <property type="project" value="UniProtKB-SubCell"/>
</dbReference>
<dbReference type="GO" id="GO:0003774">
    <property type="term" value="F:cytoskeletal motor activity"/>
    <property type="evidence" value="ECO:0007669"/>
    <property type="project" value="InterPro"/>
</dbReference>
<dbReference type="GO" id="GO:0071973">
    <property type="term" value="P:bacterial-type flagellum-dependent cell motility"/>
    <property type="evidence" value="ECO:0007669"/>
    <property type="project" value="InterPro"/>
</dbReference>
<dbReference type="GO" id="GO:0006935">
    <property type="term" value="P:chemotaxis"/>
    <property type="evidence" value="ECO:0007669"/>
    <property type="project" value="UniProtKB-KW"/>
</dbReference>
<dbReference type="FunFam" id="1.10.220.30:FF:000001">
    <property type="entry name" value="Flagellar motor switch protein FliG"/>
    <property type="match status" value="1"/>
</dbReference>
<dbReference type="FunFam" id="1.10.220.30:FF:000002">
    <property type="entry name" value="Flagellar motor switch protein FliG"/>
    <property type="match status" value="1"/>
</dbReference>
<dbReference type="Gene3D" id="1.10.220.30">
    <property type="match status" value="3"/>
</dbReference>
<dbReference type="InterPro" id="IPR000090">
    <property type="entry name" value="Flg_Motor_Flig"/>
</dbReference>
<dbReference type="InterPro" id="IPR023087">
    <property type="entry name" value="Flg_Motor_Flig_C"/>
</dbReference>
<dbReference type="InterPro" id="IPR011002">
    <property type="entry name" value="FliG_a-hlx"/>
</dbReference>
<dbReference type="InterPro" id="IPR032779">
    <property type="entry name" value="FliG_M"/>
</dbReference>
<dbReference type="InterPro" id="IPR028263">
    <property type="entry name" value="FliG_N"/>
</dbReference>
<dbReference type="NCBIfam" id="TIGR00207">
    <property type="entry name" value="fliG"/>
    <property type="match status" value="1"/>
</dbReference>
<dbReference type="PANTHER" id="PTHR30534">
    <property type="entry name" value="FLAGELLAR MOTOR SWITCH PROTEIN FLIG"/>
    <property type="match status" value="1"/>
</dbReference>
<dbReference type="PANTHER" id="PTHR30534:SF0">
    <property type="entry name" value="FLAGELLAR MOTOR SWITCH PROTEIN FLIG"/>
    <property type="match status" value="1"/>
</dbReference>
<dbReference type="Pfam" id="PF01706">
    <property type="entry name" value="FliG_C"/>
    <property type="match status" value="1"/>
</dbReference>
<dbReference type="Pfam" id="PF14841">
    <property type="entry name" value="FliG_M"/>
    <property type="match status" value="1"/>
</dbReference>
<dbReference type="Pfam" id="PF14842">
    <property type="entry name" value="FliG_N"/>
    <property type="match status" value="1"/>
</dbReference>
<dbReference type="PIRSF" id="PIRSF003161">
    <property type="entry name" value="FliG"/>
    <property type="match status" value="1"/>
</dbReference>
<dbReference type="PRINTS" id="PR00954">
    <property type="entry name" value="FLGMOTORFLIG"/>
</dbReference>
<dbReference type="SUPFAM" id="SSF48029">
    <property type="entry name" value="FliG"/>
    <property type="match status" value="2"/>
</dbReference>
<proteinExistence type="inferred from homology"/>
<name>FLIG_SALTI</name>
<comment type="function">
    <text evidence="1">FliG is one of three proteins (FliG, FliN, FliM) that forms the rotor-mounted switch complex (C ring), located at the base of the basal body. This complex interacts with the CheY and CheZ chemotaxis proteins, in addition to contacting components of the motor that determine the direction of flagellar rotation (By similarity).</text>
</comment>
<comment type="subcellular location">
    <subcellularLocation>
        <location evidence="1">Cell inner membrane</location>
        <topology evidence="1">Peripheral membrane protein</topology>
        <orientation evidence="1">Cytoplasmic side</orientation>
    </subcellularLocation>
    <subcellularLocation>
        <location evidence="1">Bacterial flagellum basal body</location>
    </subcellularLocation>
</comment>
<comment type="similarity">
    <text evidence="2">Belongs to the FliG family.</text>
</comment>
<sequence length="331" mass="36851">MSNLSGTDKSVILLMTIGEDRAAEVFKHLSTREVQALSTAMANVRQISNKQLTDVLSEFEQEAEQFAALNINANEYLRSVLVKALGEERASSLLEDILETRDTTSGIETLNFMEPQSAADLIRDEHPQIIATILVHLKRSQAADILALFDERLRHDVMLRIATFGGVQPAALAELTEVLNGLLDGQNLKRSKMGGVRTAAEIINLMKTQQEEAVITAVREFDGELAQKIIDEMFLFENLVDVDDRSIQRLLQEVDSESLLIALKGAEPPLREKFLRNMSQRAADILRDDLANRGPVRLSQVENEQKAILLIVRRLAETGEMVIGSGEDTYV</sequence>
<reference key="1">
    <citation type="journal article" date="2001" name="Nature">
        <title>Complete genome sequence of a multiple drug resistant Salmonella enterica serovar Typhi CT18.</title>
        <authorList>
            <person name="Parkhill J."/>
            <person name="Dougan G."/>
            <person name="James K.D."/>
            <person name="Thomson N.R."/>
            <person name="Pickard D."/>
            <person name="Wain J."/>
            <person name="Churcher C.M."/>
            <person name="Mungall K.L."/>
            <person name="Bentley S.D."/>
            <person name="Holden M.T.G."/>
            <person name="Sebaihia M."/>
            <person name="Baker S."/>
            <person name="Basham D."/>
            <person name="Brooks K."/>
            <person name="Chillingworth T."/>
            <person name="Connerton P."/>
            <person name="Cronin A."/>
            <person name="Davis P."/>
            <person name="Davies R.M."/>
            <person name="Dowd L."/>
            <person name="White N."/>
            <person name="Farrar J."/>
            <person name="Feltwell T."/>
            <person name="Hamlin N."/>
            <person name="Haque A."/>
            <person name="Hien T.T."/>
            <person name="Holroyd S."/>
            <person name="Jagels K."/>
            <person name="Krogh A."/>
            <person name="Larsen T.S."/>
            <person name="Leather S."/>
            <person name="Moule S."/>
            <person name="O'Gaora P."/>
            <person name="Parry C."/>
            <person name="Quail M.A."/>
            <person name="Rutherford K.M."/>
            <person name="Simmonds M."/>
            <person name="Skelton J."/>
            <person name="Stevens K."/>
            <person name="Whitehead S."/>
            <person name="Barrell B.G."/>
        </authorList>
    </citation>
    <scope>NUCLEOTIDE SEQUENCE [LARGE SCALE GENOMIC DNA]</scope>
    <source>
        <strain>CT18</strain>
    </source>
</reference>
<reference key="2">
    <citation type="journal article" date="2003" name="J. Bacteriol.">
        <title>Comparative genomics of Salmonella enterica serovar Typhi strains Ty2 and CT18.</title>
        <authorList>
            <person name="Deng W."/>
            <person name="Liou S.-R."/>
            <person name="Plunkett G. III"/>
            <person name="Mayhew G.F."/>
            <person name="Rose D.J."/>
            <person name="Burland V."/>
            <person name="Kodoyianni V."/>
            <person name="Schwartz D.C."/>
            <person name="Blattner F.R."/>
        </authorList>
    </citation>
    <scope>NUCLEOTIDE SEQUENCE [LARGE SCALE GENOMIC DNA]</scope>
    <source>
        <strain>ATCC 700931 / Ty2</strain>
    </source>
</reference>
<evidence type="ECO:0000250" key="1"/>
<evidence type="ECO:0000305" key="2"/>
<protein>
    <recommendedName>
        <fullName>Flagellar motor switch protein FliG</fullName>
    </recommendedName>
</protein>
<feature type="chain" id="PRO_0000184094" description="Flagellar motor switch protein FliG">
    <location>
        <begin position="1"/>
        <end position="331"/>
    </location>
</feature>
<feature type="short sequence motif" description="Part of the EHPQR-motif">
    <location>
        <begin position="125"/>
        <end position="128"/>
    </location>
</feature>
<feature type="site" description="Part of the EHPQR-motif">
    <location>
        <position position="160"/>
    </location>
</feature>
<organism>
    <name type="scientific">Salmonella typhi</name>
    <dbReference type="NCBI Taxonomy" id="90370"/>
    <lineage>
        <taxon>Bacteria</taxon>
        <taxon>Pseudomonadati</taxon>
        <taxon>Pseudomonadota</taxon>
        <taxon>Gammaproteobacteria</taxon>
        <taxon>Enterobacterales</taxon>
        <taxon>Enterobacteriaceae</taxon>
        <taxon>Salmonella</taxon>
    </lineage>
</organism>
<keyword id="KW-0975">Bacterial flagellum</keyword>
<keyword id="KW-0997">Cell inner membrane</keyword>
<keyword id="KW-1003">Cell membrane</keyword>
<keyword id="KW-0145">Chemotaxis</keyword>
<keyword id="KW-0283">Flagellar rotation</keyword>
<keyword id="KW-0472">Membrane</keyword>